<comment type="similarity">
    <text evidence="1">Belongs to the bacterial ribosomal protein bL32 family.</text>
</comment>
<organism>
    <name type="scientific">Paraburkholderia xenovorans (strain LB400)</name>
    <dbReference type="NCBI Taxonomy" id="266265"/>
    <lineage>
        <taxon>Bacteria</taxon>
        <taxon>Pseudomonadati</taxon>
        <taxon>Pseudomonadota</taxon>
        <taxon>Betaproteobacteria</taxon>
        <taxon>Burkholderiales</taxon>
        <taxon>Burkholderiaceae</taxon>
        <taxon>Paraburkholderia</taxon>
    </lineage>
</organism>
<name>RL32_PARXL</name>
<reference key="1">
    <citation type="journal article" date="2006" name="Proc. Natl. Acad. Sci. U.S.A.">
        <title>Burkholderia xenovorans LB400 harbors a multi-replicon, 9.73-Mbp genome shaped for versatility.</title>
        <authorList>
            <person name="Chain P.S.G."/>
            <person name="Denef V.J."/>
            <person name="Konstantinidis K.T."/>
            <person name="Vergez L.M."/>
            <person name="Agullo L."/>
            <person name="Reyes V.L."/>
            <person name="Hauser L."/>
            <person name="Cordova M."/>
            <person name="Gomez L."/>
            <person name="Gonzalez M."/>
            <person name="Land M."/>
            <person name="Lao V."/>
            <person name="Larimer F."/>
            <person name="LiPuma J.J."/>
            <person name="Mahenthiralingam E."/>
            <person name="Malfatti S.A."/>
            <person name="Marx C.J."/>
            <person name="Parnell J.J."/>
            <person name="Ramette A."/>
            <person name="Richardson P."/>
            <person name="Seeger M."/>
            <person name="Smith D."/>
            <person name="Spilker T."/>
            <person name="Sul W.J."/>
            <person name="Tsoi T.V."/>
            <person name="Ulrich L.E."/>
            <person name="Zhulin I.B."/>
            <person name="Tiedje J.M."/>
        </authorList>
    </citation>
    <scope>NUCLEOTIDE SEQUENCE [LARGE SCALE GENOMIC DNA]</scope>
    <source>
        <strain>LB400</strain>
    </source>
</reference>
<evidence type="ECO:0000255" key="1">
    <source>
        <dbReference type="HAMAP-Rule" id="MF_00340"/>
    </source>
</evidence>
<evidence type="ECO:0000256" key="2">
    <source>
        <dbReference type="SAM" id="MobiDB-lite"/>
    </source>
</evidence>
<evidence type="ECO:0000305" key="3"/>
<feature type="chain" id="PRO_0000296440" description="Large ribosomal subunit protein bL32">
    <location>
        <begin position="1"/>
        <end position="59"/>
    </location>
</feature>
<feature type="region of interest" description="Disordered" evidence="2">
    <location>
        <begin position="1"/>
        <end position="23"/>
    </location>
</feature>
<feature type="region of interest" description="Disordered" evidence="2">
    <location>
        <begin position="35"/>
        <end position="59"/>
    </location>
</feature>
<feature type="compositionally biased region" description="Basic residues" evidence="2">
    <location>
        <begin position="49"/>
        <end position="59"/>
    </location>
</feature>
<keyword id="KW-1185">Reference proteome</keyword>
<keyword id="KW-0687">Ribonucleoprotein</keyword>
<keyword id="KW-0689">Ribosomal protein</keyword>
<sequence length="59" mass="6623">MAVQQNKKSPSKRGMHRSHDFLTAAPLAVEPSTGEVHLRHHVSPNGYYRGKKVVKTKND</sequence>
<gene>
    <name evidence="1" type="primary">rpmF</name>
    <name type="ordered locus">Bxeno_A3338</name>
    <name type="ORF">Bxe_A1070</name>
</gene>
<dbReference type="EMBL" id="CP000270">
    <property type="protein sequence ID" value="ABE31876.1"/>
    <property type="molecule type" value="Genomic_DNA"/>
</dbReference>
<dbReference type="RefSeq" id="WP_006051932.1">
    <property type="nucleotide sequence ID" value="NZ_CP008760.1"/>
</dbReference>
<dbReference type="SMR" id="Q13VL3"/>
<dbReference type="STRING" id="266265.Bxe_A1070"/>
<dbReference type="GeneID" id="98102466"/>
<dbReference type="KEGG" id="bxb:DR64_3233"/>
<dbReference type="KEGG" id="bxe:Bxe_A1070"/>
<dbReference type="eggNOG" id="COG0333">
    <property type="taxonomic scope" value="Bacteria"/>
</dbReference>
<dbReference type="OrthoDB" id="9801927at2"/>
<dbReference type="Proteomes" id="UP000001817">
    <property type="component" value="Chromosome 1"/>
</dbReference>
<dbReference type="GO" id="GO:0015934">
    <property type="term" value="C:large ribosomal subunit"/>
    <property type="evidence" value="ECO:0007669"/>
    <property type="project" value="InterPro"/>
</dbReference>
<dbReference type="GO" id="GO:0003735">
    <property type="term" value="F:structural constituent of ribosome"/>
    <property type="evidence" value="ECO:0007669"/>
    <property type="project" value="InterPro"/>
</dbReference>
<dbReference type="GO" id="GO:0006412">
    <property type="term" value="P:translation"/>
    <property type="evidence" value="ECO:0007669"/>
    <property type="project" value="UniProtKB-UniRule"/>
</dbReference>
<dbReference type="HAMAP" id="MF_00340">
    <property type="entry name" value="Ribosomal_bL32"/>
    <property type="match status" value="1"/>
</dbReference>
<dbReference type="InterPro" id="IPR002677">
    <property type="entry name" value="Ribosomal_bL32"/>
</dbReference>
<dbReference type="InterPro" id="IPR044957">
    <property type="entry name" value="Ribosomal_bL32_bact"/>
</dbReference>
<dbReference type="InterPro" id="IPR011332">
    <property type="entry name" value="Ribosomal_zn-bd"/>
</dbReference>
<dbReference type="NCBIfam" id="TIGR01031">
    <property type="entry name" value="rpmF_bact"/>
    <property type="match status" value="1"/>
</dbReference>
<dbReference type="PANTHER" id="PTHR35534">
    <property type="entry name" value="50S RIBOSOMAL PROTEIN L32"/>
    <property type="match status" value="1"/>
</dbReference>
<dbReference type="PANTHER" id="PTHR35534:SF1">
    <property type="entry name" value="LARGE RIBOSOMAL SUBUNIT PROTEIN BL32"/>
    <property type="match status" value="1"/>
</dbReference>
<dbReference type="Pfam" id="PF01783">
    <property type="entry name" value="Ribosomal_L32p"/>
    <property type="match status" value="1"/>
</dbReference>
<dbReference type="SUPFAM" id="SSF57829">
    <property type="entry name" value="Zn-binding ribosomal proteins"/>
    <property type="match status" value="1"/>
</dbReference>
<accession>Q13VL3</accession>
<proteinExistence type="inferred from homology"/>
<protein>
    <recommendedName>
        <fullName evidence="1">Large ribosomal subunit protein bL32</fullName>
    </recommendedName>
    <alternativeName>
        <fullName evidence="3">50S ribosomal protein L32</fullName>
    </alternativeName>
</protein>